<keyword id="KW-0456">Lyase</keyword>
<keyword id="KW-0663">Pyridoxal phosphate</keyword>
<keyword id="KW-1185">Reference proteome</keyword>
<keyword id="KW-0704">Schiff base</keyword>
<dbReference type="EC" id="4.3.3.6" evidence="1"/>
<dbReference type="EMBL" id="AM233362">
    <property type="protein sequence ID" value="CAJ79985.1"/>
    <property type="molecule type" value="Genomic_DNA"/>
</dbReference>
<dbReference type="RefSeq" id="WP_003016899.1">
    <property type="nucleotide sequence ID" value="NZ_CP009694.1"/>
</dbReference>
<dbReference type="SMR" id="Q2A260"/>
<dbReference type="KEGG" id="ftl:FTL_1546"/>
<dbReference type="UniPathway" id="UPA00245"/>
<dbReference type="Proteomes" id="UP000001944">
    <property type="component" value="Chromosome"/>
</dbReference>
<dbReference type="GO" id="GO:0036381">
    <property type="term" value="F:pyridoxal 5'-phosphate synthase (glutamine hydrolysing) activity"/>
    <property type="evidence" value="ECO:0007669"/>
    <property type="project" value="UniProtKB-UniRule"/>
</dbReference>
<dbReference type="GO" id="GO:0006520">
    <property type="term" value="P:amino acid metabolic process"/>
    <property type="evidence" value="ECO:0007669"/>
    <property type="project" value="TreeGrafter"/>
</dbReference>
<dbReference type="GO" id="GO:0042823">
    <property type="term" value="P:pyridoxal phosphate biosynthetic process"/>
    <property type="evidence" value="ECO:0007669"/>
    <property type="project" value="UniProtKB-UniRule"/>
</dbReference>
<dbReference type="GO" id="GO:0008615">
    <property type="term" value="P:pyridoxine biosynthetic process"/>
    <property type="evidence" value="ECO:0007669"/>
    <property type="project" value="TreeGrafter"/>
</dbReference>
<dbReference type="CDD" id="cd04727">
    <property type="entry name" value="pdxS"/>
    <property type="match status" value="1"/>
</dbReference>
<dbReference type="FunFam" id="3.20.20.70:FF:000001">
    <property type="entry name" value="Pyridoxine biosynthesis protein PDX1"/>
    <property type="match status" value="1"/>
</dbReference>
<dbReference type="Gene3D" id="3.20.20.70">
    <property type="entry name" value="Aldolase class I"/>
    <property type="match status" value="1"/>
</dbReference>
<dbReference type="HAMAP" id="MF_01824">
    <property type="entry name" value="PdxS"/>
    <property type="match status" value="1"/>
</dbReference>
<dbReference type="InterPro" id="IPR013785">
    <property type="entry name" value="Aldolase_TIM"/>
</dbReference>
<dbReference type="InterPro" id="IPR001852">
    <property type="entry name" value="PdxS/SNZ"/>
</dbReference>
<dbReference type="InterPro" id="IPR033755">
    <property type="entry name" value="PdxS/SNZ_N"/>
</dbReference>
<dbReference type="InterPro" id="IPR011060">
    <property type="entry name" value="RibuloseP-bd_barrel"/>
</dbReference>
<dbReference type="NCBIfam" id="NF003215">
    <property type="entry name" value="PRK04180.1"/>
    <property type="match status" value="1"/>
</dbReference>
<dbReference type="NCBIfam" id="TIGR00343">
    <property type="entry name" value="pyridoxal 5'-phosphate synthase lyase subunit PdxS"/>
    <property type="match status" value="1"/>
</dbReference>
<dbReference type="PANTHER" id="PTHR31829">
    <property type="entry name" value="PYRIDOXAL 5'-PHOSPHATE SYNTHASE SUBUNIT SNZ1-RELATED"/>
    <property type="match status" value="1"/>
</dbReference>
<dbReference type="PANTHER" id="PTHR31829:SF0">
    <property type="entry name" value="PYRIDOXAL 5'-PHOSPHATE SYNTHASE SUBUNIT SNZ1-RELATED"/>
    <property type="match status" value="1"/>
</dbReference>
<dbReference type="Pfam" id="PF01680">
    <property type="entry name" value="SOR_SNZ"/>
    <property type="match status" value="1"/>
</dbReference>
<dbReference type="PIRSF" id="PIRSF029271">
    <property type="entry name" value="Pdx1"/>
    <property type="match status" value="1"/>
</dbReference>
<dbReference type="SUPFAM" id="SSF51366">
    <property type="entry name" value="Ribulose-phoshate binding barrel"/>
    <property type="match status" value="1"/>
</dbReference>
<dbReference type="PROSITE" id="PS01235">
    <property type="entry name" value="PDXS_SNZ_1"/>
    <property type="match status" value="1"/>
</dbReference>
<dbReference type="PROSITE" id="PS51129">
    <property type="entry name" value="PDXS_SNZ_2"/>
    <property type="match status" value="1"/>
</dbReference>
<feature type="chain" id="PRO_1000070372" description="Pyridoxal 5'-phosphate synthase subunit PdxS">
    <location>
        <begin position="1"/>
        <end position="287"/>
    </location>
</feature>
<feature type="active site" description="Schiff-base intermediate with D-ribose 5-phosphate" evidence="1">
    <location>
        <position position="78"/>
    </location>
</feature>
<feature type="binding site" evidence="1">
    <location>
        <position position="21"/>
    </location>
    <ligand>
        <name>D-ribose 5-phosphate</name>
        <dbReference type="ChEBI" id="CHEBI:78346"/>
    </ligand>
</feature>
<feature type="binding site" evidence="1">
    <location>
        <position position="150"/>
    </location>
    <ligand>
        <name>D-ribose 5-phosphate</name>
        <dbReference type="ChEBI" id="CHEBI:78346"/>
    </ligand>
</feature>
<feature type="binding site" evidence="1">
    <location>
        <position position="162"/>
    </location>
    <ligand>
        <name>D-glyceraldehyde 3-phosphate</name>
        <dbReference type="ChEBI" id="CHEBI:59776"/>
    </ligand>
</feature>
<feature type="binding site" evidence="1">
    <location>
        <position position="211"/>
    </location>
    <ligand>
        <name>D-ribose 5-phosphate</name>
        <dbReference type="ChEBI" id="CHEBI:78346"/>
    </ligand>
</feature>
<feature type="binding site" evidence="1">
    <location>
        <begin position="232"/>
        <end position="233"/>
    </location>
    <ligand>
        <name>D-ribose 5-phosphate</name>
        <dbReference type="ChEBI" id="CHEBI:78346"/>
    </ligand>
</feature>
<name>PDXS_FRATH</name>
<gene>
    <name evidence="1" type="primary">pdxS</name>
    <name type="ordered locus">FTL_1546</name>
</gene>
<accession>Q2A260</accession>
<comment type="function">
    <text evidence="1">Catalyzes the formation of pyridoxal 5'-phosphate from ribose 5-phosphate (RBP), glyceraldehyde 3-phosphate (G3P) and ammonia. The ammonia is provided by the PdxT subunit. Can also use ribulose 5-phosphate and dihydroxyacetone phosphate as substrates, resulting from enzyme-catalyzed isomerization of RBP and G3P, respectively.</text>
</comment>
<comment type="catalytic activity">
    <reaction evidence="1">
        <text>aldehydo-D-ribose 5-phosphate + D-glyceraldehyde 3-phosphate + L-glutamine = pyridoxal 5'-phosphate + L-glutamate + phosphate + 3 H2O + H(+)</text>
        <dbReference type="Rhea" id="RHEA:31507"/>
        <dbReference type="ChEBI" id="CHEBI:15377"/>
        <dbReference type="ChEBI" id="CHEBI:15378"/>
        <dbReference type="ChEBI" id="CHEBI:29985"/>
        <dbReference type="ChEBI" id="CHEBI:43474"/>
        <dbReference type="ChEBI" id="CHEBI:58273"/>
        <dbReference type="ChEBI" id="CHEBI:58359"/>
        <dbReference type="ChEBI" id="CHEBI:59776"/>
        <dbReference type="ChEBI" id="CHEBI:597326"/>
        <dbReference type="EC" id="4.3.3.6"/>
    </reaction>
</comment>
<comment type="pathway">
    <text evidence="1">Cofactor biosynthesis; pyridoxal 5'-phosphate biosynthesis.</text>
</comment>
<comment type="subunit">
    <text evidence="1">In the presence of PdxT, forms a dodecamer of heterodimers.</text>
</comment>
<comment type="similarity">
    <text evidence="1">Belongs to the PdxS/SNZ family.</text>
</comment>
<protein>
    <recommendedName>
        <fullName evidence="1">Pyridoxal 5'-phosphate synthase subunit PdxS</fullName>
        <shortName evidence="1">PLP synthase subunit PdxS</shortName>
        <ecNumber evidence="1">4.3.3.6</ecNumber>
    </recommendedName>
    <alternativeName>
        <fullName evidence="1">Pdx1</fullName>
    </alternativeName>
</protein>
<sequence>MSDINIKIGLAEMLKGGVIMDVVNAEQAEIAQQAGAVAVMALERVPADIRKDGGIARMSDPKLIKEIMSVVSIPVMAKARIGHFVEAQILESLGVDFIDESEVLTPADELNHIDKDSFKVPFVCGCTNLGEALRRIGEGAALIRTKGEAGTGNIVEAVRQLRQVNKDINYIKNADKSELMAIAKNLQAPYDLVTYVHKNGKLPVPNFSAGGVATPADAALMMQLGAESVFVGSGIFKSADPLKRARAIVSAVTYYNDAKILAEVSEDLGEPMTGINCDFEKFSQRGW</sequence>
<reference key="1">
    <citation type="submission" date="2006-03" db="EMBL/GenBank/DDBJ databases">
        <title>Complete genome sequence of Francisella tularensis LVS (Live Vaccine Strain).</title>
        <authorList>
            <person name="Chain P."/>
            <person name="Larimer F."/>
            <person name="Land M."/>
            <person name="Stilwagen S."/>
            <person name="Larsson P."/>
            <person name="Bearden S."/>
            <person name="Chu M."/>
            <person name="Oyston P."/>
            <person name="Forsman M."/>
            <person name="Andersson S."/>
            <person name="Lindler L."/>
            <person name="Titball R."/>
            <person name="Garcia E."/>
        </authorList>
    </citation>
    <scope>NUCLEOTIDE SEQUENCE [LARGE SCALE GENOMIC DNA]</scope>
    <source>
        <strain>LVS</strain>
    </source>
</reference>
<proteinExistence type="inferred from homology"/>
<evidence type="ECO:0000255" key="1">
    <source>
        <dbReference type="HAMAP-Rule" id="MF_01824"/>
    </source>
</evidence>
<organism>
    <name type="scientific">Francisella tularensis subsp. holarctica (strain LVS)</name>
    <dbReference type="NCBI Taxonomy" id="376619"/>
    <lineage>
        <taxon>Bacteria</taxon>
        <taxon>Pseudomonadati</taxon>
        <taxon>Pseudomonadota</taxon>
        <taxon>Gammaproteobacteria</taxon>
        <taxon>Thiotrichales</taxon>
        <taxon>Francisellaceae</taxon>
        <taxon>Francisella</taxon>
    </lineage>
</organism>